<dbReference type="EMBL" id="CP001389">
    <property type="protein sequence ID" value="ACP26563.1"/>
    <property type="molecule type" value="Genomic_DNA"/>
</dbReference>
<dbReference type="RefSeq" id="WP_012709319.1">
    <property type="nucleotide sequence ID" value="NC_012587.1"/>
</dbReference>
<dbReference type="RefSeq" id="YP_002827316.1">
    <property type="nucleotide sequence ID" value="NC_012587.1"/>
</dbReference>
<dbReference type="SMR" id="C3MIK0"/>
<dbReference type="STRING" id="394.NGR_c28170"/>
<dbReference type="GeneID" id="48974397"/>
<dbReference type="KEGG" id="rhi:NGR_c28170"/>
<dbReference type="PATRIC" id="fig|394.7.peg.5652"/>
<dbReference type="eggNOG" id="COG0254">
    <property type="taxonomic scope" value="Bacteria"/>
</dbReference>
<dbReference type="HOGENOM" id="CLU_114306_3_2_5"/>
<dbReference type="OrthoDB" id="9803251at2"/>
<dbReference type="Proteomes" id="UP000001054">
    <property type="component" value="Chromosome"/>
</dbReference>
<dbReference type="GO" id="GO:1990904">
    <property type="term" value="C:ribonucleoprotein complex"/>
    <property type="evidence" value="ECO:0007669"/>
    <property type="project" value="UniProtKB-KW"/>
</dbReference>
<dbReference type="GO" id="GO:0005840">
    <property type="term" value="C:ribosome"/>
    <property type="evidence" value="ECO:0007669"/>
    <property type="project" value="UniProtKB-KW"/>
</dbReference>
<dbReference type="GO" id="GO:0019843">
    <property type="term" value="F:rRNA binding"/>
    <property type="evidence" value="ECO:0007669"/>
    <property type="project" value="UniProtKB-KW"/>
</dbReference>
<dbReference type="GO" id="GO:0003735">
    <property type="term" value="F:structural constituent of ribosome"/>
    <property type="evidence" value="ECO:0007669"/>
    <property type="project" value="InterPro"/>
</dbReference>
<dbReference type="GO" id="GO:0006412">
    <property type="term" value="P:translation"/>
    <property type="evidence" value="ECO:0007669"/>
    <property type="project" value="UniProtKB-UniRule"/>
</dbReference>
<dbReference type="Gene3D" id="4.10.830.30">
    <property type="entry name" value="Ribosomal protein L31"/>
    <property type="match status" value="1"/>
</dbReference>
<dbReference type="HAMAP" id="MF_00501">
    <property type="entry name" value="Ribosomal_bL31_1"/>
    <property type="match status" value="1"/>
</dbReference>
<dbReference type="InterPro" id="IPR034704">
    <property type="entry name" value="Ribosomal_bL28/bL31-like_sf"/>
</dbReference>
<dbReference type="InterPro" id="IPR002150">
    <property type="entry name" value="Ribosomal_bL31"/>
</dbReference>
<dbReference type="InterPro" id="IPR027491">
    <property type="entry name" value="Ribosomal_bL31_A"/>
</dbReference>
<dbReference type="InterPro" id="IPR042105">
    <property type="entry name" value="Ribosomal_bL31_sf"/>
</dbReference>
<dbReference type="NCBIfam" id="TIGR00105">
    <property type="entry name" value="L31"/>
    <property type="match status" value="1"/>
</dbReference>
<dbReference type="NCBIfam" id="NF001809">
    <property type="entry name" value="PRK00528.1"/>
    <property type="match status" value="1"/>
</dbReference>
<dbReference type="PANTHER" id="PTHR33280">
    <property type="entry name" value="50S RIBOSOMAL PROTEIN L31, CHLOROPLASTIC"/>
    <property type="match status" value="1"/>
</dbReference>
<dbReference type="PANTHER" id="PTHR33280:SF6">
    <property type="entry name" value="LARGE RIBOSOMAL SUBUNIT PROTEIN BL31A"/>
    <property type="match status" value="1"/>
</dbReference>
<dbReference type="Pfam" id="PF01197">
    <property type="entry name" value="Ribosomal_L31"/>
    <property type="match status" value="1"/>
</dbReference>
<dbReference type="PRINTS" id="PR01249">
    <property type="entry name" value="RIBOSOMALL31"/>
</dbReference>
<dbReference type="SUPFAM" id="SSF143800">
    <property type="entry name" value="L28p-like"/>
    <property type="match status" value="1"/>
</dbReference>
<dbReference type="PROSITE" id="PS01143">
    <property type="entry name" value="RIBOSOMAL_L31"/>
    <property type="match status" value="1"/>
</dbReference>
<evidence type="ECO:0000255" key="1">
    <source>
        <dbReference type="HAMAP-Rule" id="MF_00501"/>
    </source>
</evidence>
<evidence type="ECO:0000305" key="2"/>
<sequence>MKAGIHPEYHTIKVVMTDGTEYETRSTWGSEGATMHLEIDSKSHPAWTGGNQQLVDRGGRVSKFKKRFEGLGL</sequence>
<keyword id="KW-1185">Reference proteome</keyword>
<keyword id="KW-0687">Ribonucleoprotein</keyword>
<keyword id="KW-0689">Ribosomal protein</keyword>
<keyword id="KW-0694">RNA-binding</keyword>
<keyword id="KW-0699">rRNA-binding</keyword>
<protein>
    <recommendedName>
        <fullName evidence="1">Large ribosomal subunit protein bL31</fullName>
    </recommendedName>
    <alternativeName>
        <fullName evidence="2">50S ribosomal protein L31</fullName>
    </alternativeName>
</protein>
<organism>
    <name type="scientific">Sinorhizobium fredii (strain NBRC 101917 / NGR234)</name>
    <dbReference type="NCBI Taxonomy" id="394"/>
    <lineage>
        <taxon>Bacteria</taxon>
        <taxon>Pseudomonadati</taxon>
        <taxon>Pseudomonadota</taxon>
        <taxon>Alphaproteobacteria</taxon>
        <taxon>Hyphomicrobiales</taxon>
        <taxon>Rhizobiaceae</taxon>
        <taxon>Sinorhizobium/Ensifer group</taxon>
        <taxon>Sinorhizobium</taxon>
    </lineage>
</organism>
<name>RL31_SINFN</name>
<proteinExistence type="inferred from homology"/>
<accession>C3MIK0</accession>
<reference key="1">
    <citation type="journal article" date="2009" name="Appl. Environ. Microbiol.">
        <title>Rhizobium sp. strain NGR234 possesses a remarkable number of secretion systems.</title>
        <authorList>
            <person name="Schmeisser C."/>
            <person name="Liesegang H."/>
            <person name="Krysciak D."/>
            <person name="Bakkou N."/>
            <person name="Le Quere A."/>
            <person name="Wollherr A."/>
            <person name="Heinemeyer I."/>
            <person name="Morgenstern B."/>
            <person name="Pommerening-Roeser A."/>
            <person name="Flores M."/>
            <person name="Palacios R."/>
            <person name="Brenner S."/>
            <person name="Gottschalk G."/>
            <person name="Schmitz R.A."/>
            <person name="Broughton W.J."/>
            <person name="Perret X."/>
            <person name="Strittmatter A.W."/>
            <person name="Streit W.R."/>
        </authorList>
    </citation>
    <scope>NUCLEOTIDE SEQUENCE [LARGE SCALE GENOMIC DNA]</scope>
    <source>
        <strain>NBRC 101917 / NGR234</strain>
    </source>
</reference>
<gene>
    <name evidence="1" type="primary">rpmE</name>
    <name type="ordered locus">NGR_c28170</name>
</gene>
<comment type="function">
    <text evidence="1">Binds the 23S rRNA.</text>
</comment>
<comment type="subunit">
    <text evidence="1">Part of the 50S ribosomal subunit.</text>
</comment>
<comment type="similarity">
    <text evidence="1">Belongs to the bacterial ribosomal protein bL31 family. Type A subfamily.</text>
</comment>
<feature type="chain" id="PRO_1000176972" description="Large ribosomal subunit protein bL31">
    <location>
        <begin position="1"/>
        <end position="73"/>
    </location>
</feature>